<evidence type="ECO:0000255" key="1"/>
<evidence type="ECO:0000256" key="2">
    <source>
        <dbReference type="SAM" id="MobiDB-lite"/>
    </source>
</evidence>
<evidence type="ECO:0000269" key="3">
    <source>
    </source>
</evidence>
<evidence type="ECO:0000269" key="4">
    <source>
    </source>
</evidence>
<evidence type="ECO:0000305" key="5"/>
<feature type="transit peptide" description="Mitochondrion" evidence="1">
    <location>
        <begin position="1"/>
        <end position="56"/>
    </location>
</feature>
<feature type="chain" id="PRO_0000255968" description="Mitochondrial metal transporter 2">
    <location>
        <begin position="57"/>
        <end position="484"/>
    </location>
</feature>
<feature type="transmembrane region" description="Helical" evidence="1">
    <location>
        <begin position="132"/>
        <end position="152"/>
    </location>
</feature>
<feature type="transmembrane region" description="Helical" evidence="1">
    <location>
        <begin position="158"/>
        <end position="178"/>
    </location>
</feature>
<feature type="transmembrane region" description="Helical" evidence="1">
    <location>
        <begin position="209"/>
        <end position="229"/>
    </location>
</feature>
<feature type="transmembrane region" description="Helical" evidence="1">
    <location>
        <begin position="256"/>
        <end position="276"/>
    </location>
</feature>
<feature type="transmembrane region" description="Helical" evidence="1">
    <location>
        <begin position="316"/>
        <end position="336"/>
    </location>
</feature>
<feature type="region of interest" description="Disordered" evidence="2">
    <location>
        <begin position="73"/>
        <end position="114"/>
    </location>
</feature>
<feature type="region of interest" description="Disordered" evidence="2">
    <location>
        <begin position="453"/>
        <end position="484"/>
    </location>
</feature>
<feature type="compositionally biased region" description="Polar residues" evidence="2">
    <location>
        <begin position="73"/>
        <end position="82"/>
    </location>
</feature>
<feature type="compositionally biased region" description="Basic and acidic residues" evidence="2">
    <location>
        <begin position="83"/>
        <end position="92"/>
    </location>
</feature>
<feature type="sequence conflict" description="In Ref. 1; CAA97939." evidence="5" ref="1">
    <original>P</original>
    <variation>T</variation>
    <location>
        <position position="17"/>
    </location>
</feature>
<gene>
    <name type="primary">MMT2</name>
    <name type="synonym">MFT2</name>
    <name type="ordered locus">YPL224C</name>
</gene>
<keyword id="KW-0406">Ion transport</keyword>
<keyword id="KW-0408">Iron</keyword>
<keyword id="KW-0409">Iron storage</keyword>
<keyword id="KW-0410">Iron transport</keyword>
<keyword id="KW-0472">Membrane</keyword>
<keyword id="KW-0496">Mitochondrion</keyword>
<keyword id="KW-1185">Reference proteome</keyword>
<keyword id="KW-0809">Transit peptide</keyword>
<keyword id="KW-0812">Transmembrane</keyword>
<keyword id="KW-1133">Transmembrane helix</keyword>
<keyword id="KW-0813">Transport</keyword>
<reference key="1">
    <citation type="journal article" date="1997" name="Nature">
        <title>The nucleotide sequence of Saccharomyces cerevisiae chromosome XVI.</title>
        <authorList>
            <person name="Bussey H."/>
            <person name="Storms R.K."/>
            <person name="Ahmed A."/>
            <person name="Albermann K."/>
            <person name="Allen E."/>
            <person name="Ansorge W."/>
            <person name="Araujo R."/>
            <person name="Aparicio A."/>
            <person name="Barrell B.G."/>
            <person name="Badcock K."/>
            <person name="Benes V."/>
            <person name="Botstein D."/>
            <person name="Bowman S."/>
            <person name="Brueckner M."/>
            <person name="Carpenter J."/>
            <person name="Cherry J.M."/>
            <person name="Chung E."/>
            <person name="Churcher C.M."/>
            <person name="Coster F."/>
            <person name="Davis K."/>
            <person name="Davis R.W."/>
            <person name="Dietrich F.S."/>
            <person name="Delius H."/>
            <person name="DiPaolo T."/>
            <person name="Dubois E."/>
            <person name="Duesterhoeft A."/>
            <person name="Duncan M."/>
            <person name="Floeth M."/>
            <person name="Fortin N."/>
            <person name="Friesen J.D."/>
            <person name="Fritz C."/>
            <person name="Goffeau A."/>
            <person name="Hall J."/>
            <person name="Hebling U."/>
            <person name="Heumann K."/>
            <person name="Hilbert H."/>
            <person name="Hillier L.W."/>
            <person name="Hunicke-Smith S."/>
            <person name="Hyman R.W."/>
            <person name="Johnston M."/>
            <person name="Kalman S."/>
            <person name="Kleine K."/>
            <person name="Komp C."/>
            <person name="Kurdi O."/>
            <person name="Lashkari D."/>
            <person name="Lew H."/>
            <person name="Lin A."/>
            <person name="Lin D."/>
            <person name="Louis E.J."/>
            <person name="Marathe R."/>
            <person name="Messenguy F."/>
            <person name="Mewes H.-W."/>
            <person name="Mirtipati S."/>
            <person name="Moestl D."/>
            <person name="Mueller-Auer S."/>
            <person name="Namath A."/>
            <person name="Nentwich U."/>
            <person name="Oefner P."/>
            <person name="Pearson D."/>
            <person name="Petel F.X."/>
            <person name="Pohl T.M."/>
            <person name="Purnelle B."/>
            <person name="Rajandream M.A."/>
            <person name="Rechmann S."/>
            <person name="Rieger M."/>
            <person name="Riles L."/>
            <person name="Roberts D."/>
            <person name="Schaefer M."/>
            <person name="Scharfe M."/>
            <person name="Scherens B."/>
            <person name="Schramm S."/>
            <person name="Schroeder M."/>
            <person name="Sdicu A.-M."/>
            <person name="Tettelin H."/>
            <person name="Urrestarazu L.A."/>
            <person name="Ushinsky S."/>
            <person name="Vierendeels F."/>
            <person name="Vissers S."/>
            <person name="Voss H."/>
            <person name="Walsh S.V."/>
            <person name="Wambutt R."/>
            <person name="Wang Y."/>
            <person name="Wedler E."/>
            <person name="Wedler H."/>
            <person name="Winnett E."/>
            <person name="Zhong W.-W."/>
            <person name="Zollner A."/>
            <person name="Vo D.H."/>
            <person name="Hani J."/>
        </authorList>
    </citation>
    <scope>NUCLEOTIDE SEQUENCE [LARGE SCALE GENOMIC DNA]</scope>
    <source>
        <strain>ATCC 204508 / S288c</strain>
    </source>
</reference>
<reference key="2">
    <citation type="journal article" date="2014" name="G3 (Bethesda)">
        <title>The reference genome sequence of Saccharomyces cerevisiae: Then and now.</title>
        <authorList>
            <person name="Engel S.R."/>
            <person name="Dietrich F.S."/>
            <person name="Fisk D.G."/>
            <person name="Binkley G."/>
            <person name="Balakrishnan R."/>
            <person name="Costanzo M.C."/>
            <person name="Dwight S.S."/>
            <person name="Hitz B.C."/>
            <person name="Karra K."/>
            <person name="Nash R.S."/>
            <person name="Weng S."/>
            <person name="Wong E.D."/>
            <person name="Lloyd P."/>
            <person name="Skrzypek M.S."/>
            <person name="Miyasato S.R."/>
            <person name="Simison M."/>
            <person name="Cherry J.M."/>
        </authorList>
    </citation>
    <scope>GENOME REANNOTATION</scope>
    <scope>SEQUENCE REVISION TO 17 AND 442</scope>
    <source>
        <strain>ATCC 204508 / S288c</strain>
    </source>
</reference>
<reference key="3">
    <citation type="journal article" date="1997" name="J. Biol. Chem.">
        <title>Characterization of two homologous yeast genes that encode mitochondrial iron transporters.</title>
        <authorList>
            <person name="Li L."/>
            <person name="Kaplan J."/>
        </authorList>
    </citation>
    <scope>FUNCTION</scope>
    <scope>SUBCELLULAR LOCATION</scope>
</reference>
<reference key="4">
    <citation type="journal article" date="2003" name="Proc. Natl. Acad. Sci. U.S.A.">
        <title>The proteome of Saccharomyces cerevisiae mitochondria.</title>
        <authorList>
            <person name="Sickmann A."/>
            <person name="Reinders J."/>
            <person name="Wagner Y."/>
            <person name="Joppich C."/>
            <person name="Zahedi R.P."/>
            <person name="Meyer H.E."/>
            <person name="Schoenfisch B."/>
            <person name="Perschil I."/>
            <person name="Chacinska A."/>
            <person name="Guiard B."/>
            <person name="Rehling P."/>
            <person name="Pfanner N."/>
            <person name="Meisinger C."/>
        </authorList>
    </citation>
    <scope>SUBCELLULAR LOCATION [LARGE SCALE ANALYSIS]</scope>
    <source>
        <strain>ATCC 76625 / YPH499</strain>
    </source>
</reference>
<dbReference type="EMBL" id="Z73580">
    <property type="protein sequence ID" value="CAA97939.1"/>
    <property type="status" value="ALT_FRAME"/>
    <property type="molecule type" value="Genomic_DNA"/>
</dbReference>
<dbReference type="EMBL" id="BK006949">
    <property type="protein sequence ID" value="DAA11212.2"/>
    <property type="molecule type" value="Genomic_DNA"/>
</dbReference>
<dbReference type="PIR" id="S65243">
    <property type="entry name" value="S65243"/>
</dbReference>
<dbReference type="RefSeq" id="NP_015100.2">
    <property type="nucleotide sequence ID" value="NM_001184038.2"/>
</dbReference>
<dbReference type="BioGRID" id="35961">
    <property type="interactions" value="109"/>
</dbReference>
<dbReference type="DIP" id="DIP-3963N"/>
<dbReference type="FunCoup" id="Q08970">
    <property type="interactions" value="124"/>
</dbReference>
<dbReference type="MINT" id="Q08970"/>
<dbReference type="STRING" id="4932.YPL224C"/>
<dbReference type="TCDB" id="2.A.4.1.6">
    <property type="family name" value="the cation diffusion facilitator (cdf) family"/>
</dbReference>
<dbReference type="GlyGen" id="Q08970">
    <property type="glycosylation" value="1 site"/>
</dbReference>
<dbReference type="PaxDb" id="4932-YPL224C"/>
<dbReference type="PeptideAtlas" id="Q08970"/>
<dbReference type="EnsemblFungi" id="YPL224C_mRNA">
    <property type="protein sequence ID" value="YPL224C"/>
    <property type="gene ID" value="YPL224C"/>
</dbReference>
<dbReference type="GeneID" id="855877"/>
<dbReference type="KEGG" id="sce:YPL224C"/>
<dbReference type="AGR" id="SGD:S000006145"/>
<dbReference type="SGD" id="S000006145">
    <property type="gene designation" value="MMT2"/>
</dbReference>
<dbReference type="VEuPathDB" id="FungiDB:YPL224C"/>
<dbReference type="eggNOG" id="KOG1485">
    <property type="taxonomic scope" value="Eukaryota"/>
</dbReference>
<dbReference type="GeneTree" id="ENSGT00940000176753"/>
<dbReference type="HOGENOM" id="CLU_013430_12_1_1"/>
<dbReference type="InParanoid" id="Q08970"/>
<dbReference type="OMA" id="YFLNIYW"/>
<dbReference type="OrthoDB" id="435980at2759"/>
<dbReference type="BioCyc" id="YEAST:G3O-34113-MONOMER"/>
<dbReference type="BioGRID-ORCS" id="855877">
    <property type="hits" value="9 hits in 10 CRISPR screens"/>
</dbReference>
<dbReference type="PRO" id="PR:Q08970"/>
<dbReference type="Proteomes" id="UP000002311">
    <property type="component" value="Chromosome XVI"/>
</dbReference>
<dbReference type="RNAct" id="Q08970">
    <property type="molecule type" value="protein"/>
</dbReference>
<dbReference type="GO" id="GO:0016020">
    <property type="term" value="C:membrane"/>
    <property type="evidence" value="ECO:0000318"/>
    <property type="project" value="GO_Central"/>
</dbReference>
<dbReference type="GO" id="GO:0031966">
    <property type="term" value="C:mitochondrial membrane"/>
    <property type="evidence" value="ECO:0007669"/>
    <property type="project" value="UniProtKB-SubCell"/>
</dbReference>
<dbReference type="GO" id="GO:0005739">
    <property type="term" value="C:mitochondrion"/>
    <property type="evidence" value="ECO:0000314"/>
    <property type="project" value="SGD"/>
</dbReference>
<dbReference type="GO" id="GO:0008324">
    <property type="term" value="F:monoatomic cation transmembrane transporter activity"/>
    <property type="evidence" value="ECO:0000318"/>
    <property type="project" value="GO_Central"/>
</dbReference>
<dbReference type="GO" id="GO:0006879">
    <property type="term" value="P:intracellular iron ion homeostasis"/>
    <property type="evidence" value="ECO:0000315"/>
    <property type="project" value="SGD"/>
</dbReference>
<dbReference type="GO" id="GO:0006826">
    <property type="term" value="P:iron ion transport"/>
    <property type="evidence" value="ECO:0007669"/>
    <property type="project" value="UniProtKB-KW"/>
</dbReference>
<dbReference type="FunFam" id="1.20.1510.10:FF:000013">
    <property type="entry name" value="Cation efflux family protein"/>
    <property type="match status" value="1"/>
</dbReference>
<dbReference type="Gene3D" id="1.20.1510.10">
    <property type="entry name" value="Cation efflux protein transmembrane domain"/>
    <property type="match status" value="1"/>
</dbReference>
<dbReference type="InterPro" id="IPR002524">
    <property type="entry name" value="Cation_efflux"/>
</dbReference>
<dbReference type="InterPro" id="IPR027469">
    <property type="entry name" value="Cation_efflux_TMD_sf"/>
</dbReference>
<dbReference type="InterPro" id="IPR050291">
    <property type="entry name" value="CDF_Transporter"/>
</dbReference>
<dbReference type="NCBIfam" id="TIGR01297">
    <property type="entry name" value="CDF"/>
    <property type="match status" value="1"/>
</dbReference>
<dbReference type="PANTHER" id="PTHR43840">
    <property type="entry name" value="MITOCHONDRIAL METAL TRANSPORTER 1-RELATED"/>
    <property type="match status" value="1"/>
</dbReference>
<dbReference type="PANTHER" id="PTHR43840:SF15">
    <property type="entry name" value="MITOCHONDRIAL METAL TRANSPORTER 1-RELATED"/>
    <property type="match status" value="1"/>
</dbReference>
<dbReference type="Pfam" id="PF01545">
    <property type="entry name" value="Cation_efflux"/>
    <property type="match status" value="1"/>
</dbReference>
<dbReference type="SUPFAM" id="SSF161111">
    <property type="entry name" value="Cation efflux protein transmembrane domain-like"/>
    <property type="match status" value="1"/>
</dbReference>
<name>MMT2_YEAST</name>
<comment type="function">
    <text evidence="4">Mitochondrial metal transporter involved in mitochondrial iron accumulation.</text>
</comment>
<comment type="subcellular location">
    <subcellularLocation>
        <location evidence="3 4">Mitochondrion membrane</location>
        <topology evidence="3 4">Multi-pass membrane protein</topology>
    </subcellularLocation>
</comment>
<comment type="similarity">
    <text evidence="5">Belongs to the cation diffusion facilitator (CDF) transporter (TC 2.A.4) family. SLC30A subfamily.</text>
</comment>
<comment type="sequence caution" evidence="5">
    <conflict type="frameshift">
        <sequence resource="EMBL-CDS" id="CAA97939"/>
    </conflict>
</comment>
<proteinExistence type="inferred from homology"/>
<accession>Q08970</accession>
<accession>D6W3E6</accession>
<organism>
    <name type="scientific">Saccharomyces cerevisiae (strain ATCC 204508 / S288c)</name>
    <name type="common">Baker's yeast</name>
    <dbReference type="NCBI Taxonomy" id="559292"/>
    <lineage>
        <taxon>Eukaryota</taxon>
        <taxon>Fungi</taxon>
        <taxon>Dikarya</taxon>
        <taxon>Ascomycota</taxon>
        <taxon>Saccharomycotina</taxon>
        <taxon>Saccharomycetes</taxon>
        <taxon>Saccharomycetales</taxon>
        <taxon>Saccharomycetaceae</taxon>
        <taxon>Saccharomyces</taxon>
    </lineage>
</organism>
<sequence length="484" mass="52434">MLRISIDSIKQFGSFVPGYNNTSYHAAGRAIRTSSLYSTMISANPRRCLHSSKLLNKEGQEEGYNEQLISKMSSQNGSNSRQNESEGKKEGKASSVKSLLQHTHSHSHTHMHDNPLLSLNVQQIKKNPGVRITWIGLASNVGMAVGKFVGGITFHSQALLADSVHALSDLVSDFLTLFSVQYASRKPTSEYPYGYGKVETVGSLAVSTILAMAGISIGWSSLCAIVGPVIPHAILESMAGLIGETHSHSQSLTQQATNVNAVWIAAGSILVKEWVFQATKKVAIQTNSNVLMANAWHHRVDSLTSLVALVAITSSYFFNIQSLDNLGGLVVSGLIIKTGGQGILSSLKELVDQSIPPTDPRYLEIESVIKDSIGSLKTDLDLKQSLHVRDLTILASGPNLRATTTLEVPVLHSGQEVGIRFLENAISTIREDLRMKVPNVGKVDVEFVDVTSDSKGDLEHSHDTKSTNHTHTHSDSADTHTHKH</sequence>
<protein>
    <recommendedName>
        <fullName>Mitochondrial metal transporter 2</fullName>
    </recommendedName>
</protein>